<dbReference type="EMBL" id="AK018071">
    <property type="protein sequence ID" value="BAB31060.1"/>
    <property type="molecule type" value="mRNA"/>
</dbReference>
<dbReference type="EMBL" id="BC030317">
    <property type="protein sequence ID" value="AAH30317.1"/>
    <property type="molecule type" value="mRNA"/>
</dbReference>
<dbReference type="CCDS" id="CCDS51428.1"/>
<dbReference type="RefSeq" id="NP_083253.1">
    <property type="nucleotide sequence ID" value="NM_028977.1"/>
</dbReference>
<dbReference type="SMR" id="Q9CXD9"/>
<dbReference type="FunCoup" id="Q9CXD9">
    <property type="interactions" value="273"/>
</dbReference>
<dbReference type="STRING" id="10090.ENSMUSP00000038569"/>
<dbReference type="PhosphoSitePlus" id="Q9CXD9"/>
<dbReference type="jPOST" id="Q9CXD9"/>
<dbReference type="PaxDb" id="10090-ENSMUSP00000038569"/>
<dbReference type="ProteomicsDB" id="287261"/>
<dbReference type="Pumba" id="Q9CXD9"/>
<dbReference type="Antibodypedia" id="31152">
    <property type="antibodies" value="52 antibodies from 15 providers"/>
</dbReference>
<dbReference type="Ensembl" id="ENSMUST00000035651.6">
    <property type="protein sequence ID" value="ENSMUSP00000038569.5"/>
    <property type="gene ID" value="ENSMUSG00000039883.6"/>
</dbReference>
<dbReference type="GeneID" id="74511"/>
<dbReference type="KEGG" id="mmu:74511"/>
<dbReference type="UCSC" id="uc008wor.2">
    <property type="organism name" value="mouse"/>
</dbReference>
<dbReference type="AGR" id="MGI:1921761"/>
<dbReference type="CTD" id="10234"/>
<dbReference type="MGI" id="MGI:1921761">
    <property type="gene designation" value="Lrrc17"/>
</dbReference>
<dbReference type="VEuPathDB" id="HostDB:ENSMUSG00000039883"/>
<dbReference type="eggNOG" id="KOG0619">
    <property type="taxonomic scope" value="Eukaryota"/>
</dbReference>
<dbReference type="GeneTree" id="ENSGT00940000156400"/>
<dbReference type="HOGENOM" id="CLU_049990_0_0_1"/>
<dbReference type="InParanoid" id="Q9CXD9"/>
<dbReference type="OMA" id="LHYFQYG"/>
<dbReference type="OrthoDB" id="11985at9989"/>
<dbReference type="PhylomeDB" id="Q9CXD9"/>
<dbReference type="BioGRID-ORCS" id="74511">
    <property type="hits" value="6 hits in 77 CRISPR screens"/>
</dbReference>
<dbReference type="PRO" id="PR:Q9CXD9"/>
<dbReference type="Proteomes" id="UP000000589">
    <property type="component" value="Chromosome 5"/>
</dbReference>
<dbReference type="RNAct" id="Q9CXD9">
    <property type="molecule type" value="protein"/>
</dbReference>
<dbReference type="Bgee" id="ENSMUSG00000039883">
    <property type="expression patterns" value="Expressed in humerus cartilage element and 130 other cell types or tissues"/>
</dbReference>
<dbReference type="GO" id="GO:0005615">
    <property type="term" value="C:extracellular space"/>
    <property type="evidence" value="ECO:0000314"/>
    <property type="project" value="UniProtKB"/>
</dbReference>
<dbReference type="GO" id="GO:0048539">
    <property type="term" value="P:bone marrow development"/>
    <property type="evidence" value="ECO:0000314"/>
    <property type="project" value="UniProtKB"/>
</dbReference>
<dbReference type="GO" id="GO:0045671">
    <property type="term" value="P:negative regulation of osteoclast differentiation"/>
    <property type="evidence" value="ECO:0000314"/>
    <property type="project" value="UniProtKB"/>
</dbReference>
<dbReference type="GO" id="GO:0001503">
    <property type="term" value="P:ossification"/>
    <property type="evidence" value="ECO:0007669"/>
    <property type="project" value="UniProtKB-KW"/>
</dbReference>
<dbReference type="FunFam" id="3.80.10.10:FF:000098">
    <property type="entry name" value="leucine-rich repeat-containing protein 17"/>
    <property type="match status" value="1"/>
</dbReference>
<dbReference type="FunFam" id="3.80.10.10:FF:000117">
    <property type="entry name" value="leucine-rich repeat-containing protein 17"/>
    <property type="match status" value="1"/>
</dbReference>
<dbReference type="Gene3D" id="3.80.10.10">
    <property type="entry name" value="Ribonuclease Inhibitor"/>
    <property type="match status" value="2"/>
</dbReference>
<dbReference type="InterPro" id="IPR000483">
    <property type="entry name" value="Cys-rich_flank_reg_C"/>
</dbReference>
<dbReference type="InterPro" id="IPR001611">
    <property type="entry name" value="Leu-rich_rpt"/>
</dbReference>
<dbReference type="InterPro" id="IPR003591">
    <property type="entry name" value="Leu-rich_rpt_typical-subtyp"/>
</dbReference>
<dbReference type="InterPro" id="IPR032675">
    <property type="entry name" value="LRR_dom_sf"/>
</dbReference>
<dbReference type="InterPro" id="IPR050541">
    <property type="entry name" value="LRR_TM_domain-containing"/>
</dbReference>
<dbReference type="PANTHER" id="PTHR24369">
    <property type="entry name" value="ANTIGEN BSP, PUTATIVE-RELATED"/>
    <property type="match status" value="1"/>
</dbReference>
<dbReference type="PANTHER" id="PTHR24369:SF213">
    <property type="entry name" value="INSULIN LIKE GROWTH FACTOR BINDING PROTEIN ACID LABILE SUBUNIT"/>
    <property type="match status" value="1"/>
</dbReference>
<dbReference type="Pfam" id="PF13855">
    <property type="entry name" value="LRR_8"/>
    <property type="match status" value="2"/>
</dbReference>
<dbReference type="PRINTS" id="PR00019">
    <property type="entry name" value="LEURICHRPT"/>
</dbReference>
<dbReference type="SMART" id="SM00365">
    <property type="entry name" value="LRR_SD22"/>
    <property type="match status" value="5"/>
</dbReference>
<dbReference type="SMART" id="SM00369">
    <property type="entry name" value="LRR_TYP"/>
    <property type="match status" value="5"/>
</dbReference>
<dbReference type="SMART" id="SM00082">
    <property type="entry name" value="LRRCT"/>
    <property type="match status" value="2"/>
</dbReference>
<dbReference type="SUPFAM" id="SSF52058">
    <property type="entry name" value="L domain-like"/>
    <property type="match status" value="1"/>
</dbReference>
<dbReference type="PROSITE" id="PS51450">
    <property type="entry name" value="LRR"/>
    <property type="match status" value="6"/>
</dbReference>
<feature type="signal peptide" evidence="1">
    <location>
        <begin position="1"/>
        <end position="15"/>
    </location>
</feature>
<feature type="chain" id="PRO_0000021609" description="Leucine-rich repeat-containing protein 17">
    <location>
        <begin position="16"/>
        <end position="443"/>
    </location>
</feature>
<feature type="repeat" description="LRR 1">
    <location>
        <begin position="84"/>
        <end position="105"/>
    </location>
</feature>
<feature type="repeat" description="LRR 2">
    <location>
        <begin position="108"/>
        <end position="129"/>
    </location>
</feature>
<feature type="repeat" description="LRR 3">
    <location>
        <begin position="132"/>
        <end position="153"/>
    </location>
</feature>
<feature type="domain" description="LRRCT 1">
    <location>
        <begin position="165"/>
        <end position="216"/>
    </location>
</feature>
<feature type="domain" description="LRRNT">
    <location>
        <begin position="229"/>
        <end position="270"/>
    </location>
</feature>
<feature type="repeat" description="LRR 4">
    <location>
        <begin position="271"/>
        <end position="292"/>
    </location>
</feature>
<feature type="repeat" description="LRR 5">
    <location>
        <begin position="295"/>
        <end position="316"/>
    </location>
</feature>
<feature type="repeat" description="LRR 6">
    <location>
        <begin position="319"/>
        <end position="342"/>
    </location>
</feature>
<feature type="domain" description="LRRCT 2">
    <location>
        <begin position="352"/>
        <end position="404"/>
    </location>
</feature>
<feature type="region of interest" description="Disordered" evidence="2">
    <location>
        <begin position="20"/>
        <end position="48"/>
    </location>
</feature>
<comment type="function">
    <text evidence="3">Involved in bone homeostasis. Acts as a negative regulator of RANKL-induced osteoclast precursor differentiation from bone marrow precursors.</text>
</comment>
<comment type="subcellular location">
    <subcellularLocation>
        <location evidence="3">Secreted</location>
        <location evidence="3">Extracellular space</location>
    </subcellularLocation>
</comment>
<comment type="tissue specificity">
    <text evidence="3">Expressed in osteoblasts, spleen, lung and heart.</text>
</comment>
<comment type="induction">
    <text evidence="3">Down-regulated in osteoblasts in response to pro-osteoclastogenic factors.</text>
</comment>
<reference key="1">
    <citation type="journal article" date="2005" name="Science">
        <title>The transcriptional landscape of the mammalian genome.</title>
        <authorList>
            <person name="Carninci P."/>
            <person name="Kasukawa T."/>
            <person name="Katayama S."/>
            <person name="Gough J."/>
            <person name="Frith M.C."/>
            <person name="Maeda N."/>
            <person name="Oyama R."/>
            <person name="Ravasi T."/>
            <person name="Lenhard B."/>
            <person name="Wells C."/>
            <person name="Kodzius R."/>
            <person name="Shimokawa K."/>
            <person name="Bajic V.B."/>
            <person name="Brenner S.E."/>
            <person name="Batalov S."/>
            <person name="Forrest A.R."/>
            <person name="Zavolan M."/>
            <person name="Davis M.J."/>
            <person name="Wilming L.G."/>
            <person name="Aidinis V."/>
            <person name="Allen J.E."/>
            <person name="Ambesi-Impiombato A."/>
            <person name="Apweiler R."/>
            <person name="Aturaliya R.N."/>
            <person name="Bailey T.L."/>
            <person name="Bansal M."/>
            <person name="Baxter L."/>
            <person name="Beisel K.W."/>
            <person name="Bersano T."/>
            <person name="Bono H."/>
            <person name="Chalk A.M."/>
            <person name="Chiu K.P."/>
            <person name="Choudhary V."/>
            <person name="Christoffels A."/>
            <person name="Clutterbuck D.R."/>
            <person name="Crowe M.L."/>
            <person name="Dalla E."/>
            <person name="Dalrymple B.P."/>
            <person name="de Bono B."/>
            <person name="Della Gatta G."/>
            <person name="di Bernardo D."/>
            <person name="Down T."/>
            <person name="Engstrom P."/>
            <person name="Fagiolini M."/>
            <person name="Faulkner G."/>
            <person name="Fletcher C.F."/>
            <person name="Fukushima T."/>
            <person name="Furuno M."/>
            <person name="Futaki S."/>
            <person name="Gariboldi M."/>
            <person name="Georgii-Hemming P."/>
            <person name="Gingeras T.R."/>
            <person name="Gojobori T."/>
            <person name="Green R.E."/>
            <person name="Gustincich S."/>
            <person name="Harbers M."/>
            <person name="Hayashi Y."/>
            <person name="Hensch T.K."/>
            <person name="Hirokawa N."/>
            <person name="Hill D."/>
            <person name="Huminiecki L."/>
            <person name="Iacono M."/>
            <person name="Ikeo K."/>
            <person name="Iwama A."/>
            <person name="Ishikawa T."/>
            <person name="Jakt M."/>
            <person name="Kanapin A."/>
            <person name="Katoh M."/>
            <person name="Kawasawa Y."/>
            <person name="Kelso J."/>
            <person name="Kitamura H."/>
            <person name="Kitano H."/>
            <person name="Kollias G."/>
            <person name="Krishnan S.P."/>
            <person name="Kruger A."/>
            <person name="Kummerfeld S.K."/>
            <person name="Kurochkin I.V."/>
            <person name="Lareau L.F."/>
            <person name="Lazarevic D."/>
            <person name="Lipovich L."/>
            <person name="Liu J."/>
            <person name="Liuni S."/>
            <person name="McWilliam S."/>
            <person name="Madan Babu M."/>
            <person name="Madera M."/>
            <person name="Marchionni L."/>
            <person name="Matsuda H."/>
            <person name="Matsuzawa S."/>
            <person name="Miki H."/>
            <person name="Mignone F."/>
            <person name="Miyake S."/>
            <person name="Morris K."/>
            <person name="Mottagui-Tabar S."/>
            <person name="Mulder N."/>
            <person name="Nakano N."/>
            <person name="Nakauchi H."/>
            <person name="Ng P."/>
            <person name="Nilsson R."/>
            <person name="Nishiguchi S."/>
            <person name="Nishikawa S."/>
            <person name="Nori F."/>
            <person name="Ohara O."/>
            <person name="Okazaki Y."/>
            <person name="Orlando V."/>
            <person name="Pang K.C."/>
            <person name="Pavan W.J."/>
            <person name="Pavesi G."/>
            <person name="Pesole G."/>
            <person name="Petrovsky N."/>
            <person name="Piazza S."/>
            <person name="Reed J."/>
            <person name="Reid J.F."/>
            <person name="Ring B.Z."/>
            <person name="Ringwald M."/>
            <person name="Rost B."/>
            <person name="Ruan Y."/>
            <person name="Salzberg S.L."/>
            <person name="Sandelin A."/>
            <person name="Schneider C."/>
            <person name="Schoenbach C."/>
            <person name="Sekiguchi K."/>
            <person name="Semple C.A."/>
            <person name="Seno S."/>
            <person name="Sessa L."/>
            <person name="Sheng Y."/>
            <person name="Shibata Y."/>
            <person name="Shimada H."/>
            <person name="Shimada K."/>
            <person name="Silva D."/>
            <person name="Sinclair B."/>
            <person name="Sperling S."/>
            <person name="Stupka E."/>
            <person name="Sugiura K."/>
            <person name="Sultana R."/>
            <person name="Takenaka Y."/>
            <person name="Taki K."/>
            <person name="Tammoja K."/>
            <person name="Tan S.L."/>
            <person name="Tang S."/>
            <person name="Taylor M.S."/>
            <person name="Tegner J."/>
            <person name="Teichmann S.A."/>
            <person name="Ueda H.R."/>
            <person name="van Nimwegen E."/>
            <person name="Verardo R."/>
            <person name="Wei C.L."/>
            <person name="Yagi K."/>
            <person name="Yamanishi H."/>
            <person name="Zabarovsky E."/>
            <person name="Zhu S."/>
            <person name="Zimmer A."/>
            <person name="Hide W."/>
            <person name="Bult C."/>
            <person name="Grimmond S.M."/>
            <person name="Teasdale R.D."/>
            <person name="Liu E.T."/>
            <person name="Brusic V."/>
            <person name="Quackenbush J."/>
            <person name="Wahlestedt C."/>
            <person name="Mattick J.S."/>
            <person name="Hume D.A."/>
            <person name="Kai C."/>
            <person name="Sasaki D."/>
            <person name="Tomaru Y."/>
            <person name="Fukuda S."/>
            <person name="Kanamori-Katayama M."/>
            <person name="Suzuki M."/>
            <person name="Aoki J."/>
            <person name="Arakawa T."/>
            <person name="Iida J."/>
            <person name="Imamura K."/>
            <person name="Itoh M."/>
            <person name="Kato T."/>
            <person name="Kawaji H."/>
            <person name="Kawagashira N."/>
            <person name="Kawashima T."/>
            <person name="Kojima M."/>
            <person name="Kondo S."/>
            <person name="Konno H."/>
            <person name="Nakano K."/>
            <person name="Ninomiya N."/>
            <person name="Nishio T."/>
            <person name="Okada M."/>
            <person name="Plessy C."/>
            <person name="Shibata K."/>
            <person name="Shiraki T."/>
            <person name="Suzuki S."/>
            <person name="Tagami M."/>
            <person name="Waki K."/>
            <person name="Watahiki A."/>
            <person name="Okamura-Oho Y."/>
            <person name="Suzuki H."/>
            <person name="Kawai J."/>
            <person name="Hayashizaki Y."/>
        </authorList>
    </citation>
    <scope>NUCLEOTIDE SEQUENCE [LARGE SCALE MRNA]</scope>
    <source>
        <strain>C57BL/6J</strain>
        <tissue>Thymus</tissue>
    </source>
</reference>
<reference key="2">
    <citation type="journal article" date="2004" name="Genome Res.">
        <title>The status, quality, and expansion of the NIH full-length cDNA project: the Mammalian Gene Collection (MGC).</title>
        <authorList>
            <consortium name="The MGC Project Team"/>
        </authorList>
    </citation>
    <scope>NUCLEOTIDE SEQUENCE [LARGE SCALE MRNA]</scope>
    <source>
        <strain>FVB/N-3</strain>
        <tissue>Mammary tumor</tissue>
    </source>
</reference>
<reference key="3">
    <citation type="journal article" date="2009" name="J. Biol. Chem.">
        <title>Identification of LRRc17 as a negative regulator of receptor activator of NF-kappaB ligand (RANKL)-induced osteoclast differentiation.</title>
        <authorList>
            <person name="Kim T."/>
            <person name="Kim K."/>
            <person name="Lee S.H."/>
            <person name="So H.-S."/>
            <person name="Lee J."/>
            <person name="Kim N."/>
            <person name="Choi Y."/>
        </authorList>
    </citation>
    <scope>FUNCTION</scope>
    <scope>SUBCELLULAR LOCATION</scope>
    <scope>INDUCTION</scope>
    <scope>TISSUE SPECIFICITY</scope>
</reference>
<name>LRC17_MOUSE</name>
<protein>
    <recommendedName>
        <fullName>Leucine-rich repeat-containing protein 17</fullName>
    </recommendedName>
</protein>
<evidence type="ECO:0000255" key="1"/>
<evidence type="ECO:0000256" key="2">
    <source>
        <dbReference type="SAM" id="MobiDB-lite"/>
    </source>
</evidence>
<evidence type="ECO:0000269" key="3">
    <source>
    </source>
</evidence>
<keyword id="KW-0433">Leucine-rich repeat</keyword>
<keyword id="KW-0892">Osteogenesis</keyword>
<keyword id="KW-1185">Reference proteome</keyword>
<keyword id="KW-0677">Repeat</keyword>
<keyword id="KW-0964">Secreted</keyword>
<keyword id="KW-0732">Signal</keyword>
<gene>
    <name type="primary">Lrrc17</name>
</gene>
<sequence>MRIVAILLLFCLCRAAEPRKSSPGVLRSQGNPSRSHGRGGRRGSSPVKRYAPGLPCDVYTYLHEKYLDCQERKLVYVLPDWPQDLLHMLLARNKIRVLKNNMFAKFKRLKSLDLQQNEISKIESEAFFGLNKLTTLLLQHNQIKVLTEEAFIYTPLLSYLRLYDNPWHCTCELETLISMLQIPRNRNLGNYAKCGSPPALRNKKLLQLKPQELCDEEEKEQLDPKPQVSGIPAVIRPEADSTLCHNYVFPIQTLDCKRKELKKVPSNIPPDIVKLDLSSNKIRQLRPKEFEDVHELKKLNLSSNGIEFIDPAAFLGLIHLEELDLSNNSLQNFDYGVLEDLYFLKLLWLRDNPWRCDYSIHYLYYWLKHHYNVHYNGLECKTPEEYKGWSVGKYVRSYYEECPKDKLPAYPETFDQDTEDDEWQKIHRDHPAKKHRVRITIVG</sequence>
<proteinExistence type="evidence at transcript level"/>
<organism>
    <name type="scientific">Mus musculus</name>
    <name type="common">Mouse</name>
    <dbReference type="NCBI Taxonomy" id="10090"/>
    <lineage>
        <taxon>Eukaryota</taxon>
        <taxon>Metazoa</taxon>
        <taxon>Chordata</taxon>
        <taxon>Craniata</taxon>
        <taxon>Vertebrata</taxon>
        <taxon>Euteleostomi</taxon>
        <taxon>Mammalia</taxon>
        <taxon>Eutheria</taxon>
        <taxon>Euarchontoglires</taxon>
        <taxon>Glires</taxon>
        <taxon>Rodentia</taxon>
        <taxon>Myomorpha</taxon>
        <taxon>Muroidea</taxon>
        <taxon>Muridae</taxon>
        <taxon>Murinae</taxon>
        <taxon>Mus</taxon>
        <taxon>Mus</taxon>
    </lineage>
</organism>
<accession>Q9CXD9</accession>